<gene>
    <name evidence="4" type="primary">H2ap</name>
    <name evidence="4" type="synonym">Hypm</name>
</gene>
<proteinExistence type="inferred from homology"/>
<reference key="1">
    <citation type="journal article" date="2005" name="Science">
        <title>The transcriptional landscape of the mammalian genome.</title>
        <authorList>
            <person name="Carninci P."/>
            <person name="Kasukawa T."/>
            <person name="Katayama S."/>
            <person name="Gough J."/>
            <person name="Frith M.C."/>
            <person name="Maeda N."/>
            <person name="Oyama R."/>
            <person name="Ravasi T."/>
            <person name="Lenhard B."/>
            <person name="Wells C."/>
            <person name="Kodzius R."/>
            <person name="Shimokawa K."/>
            <person name="Bajic V.B."/>
            <person name="Brenner S.E."/>
            <person name="Batalov S."/>
            <person name="Forrest A.R."/>
            <person name="Zavolan M."/>
            <person name="Davis M.J."/>
            <person name="Wilming L.G."/>
            <person name="Aidinis V."/>
            <person name="Allen J.E."/>
            <person name="Ambesi-Impiombato A."/>
            <person name="Apweiler R."/>
            <person name="Aturaliya R.N."/>
            <person name="Bailey T.L."/>
            <person name="Bansal M."/>
            <person name="Baxter L."/>
            <person name="Beisel K.W."/>
            <person name="Bersano T."/>
            <person name="Bono H."/>
            <person name="Chalk A.M."/>
            <person name="Chiu K.P."/>
            <person name="Choudhary V."/>
            <person name="Christoffels A."/>
            <person name="Clutterbuck D.R."/>
            <person name="Crowe M.L."/>
            <person name="Dalla E."/>
            <person name="Dalrymple B.P."/>
            <person name="de Bono B."/>
            <person name="Della Gatta G."/>
            <person name="di Bernardo D."/>
            <person name="Down T."/>
            <person name="Engstrom P."/>
            <person name="Fagiolini M."/>
            <person name="Faulkner G."/>
            <person name="Fletcher C.F."/>
            <person name="Fukushima T."/>
            <person name="Furuno M."/>
            <person name="Futaki S."/>
            <person name="Gariboldi M."/>
            <person name="Georgii-Hemming P."/>
            <person name="Gingeras T.R."/>
            <person name="Gojobori T."/>
            <person name="Green R.E."/>
            <person name="Gustincich S."/>
            <person name="Harbers M."/>
            <person name="Hayashi Y."/>
            <person name="Hensch T.K."/>
            <person name="Hirokawa N."/>
            <person name="Hill D."/>
            <person name="Huminiecki L."/>
            <person name="Iacono M."/>
            <person name="Ikeo K."/>
            <person name="Iwama A."/>
            <person name="Ishikawa T."/>
            <person name="Jakt M."/>
            <person name="Kanapin A."/>
            <person name="Katoh M."/>
            <person name="Kawasawa Y."/>
            <person name="Kelso J."/>
            <person name="Kitamura H."/>
            <person name="Kitano H."/>
            <person name="Kollias G."/>
            <person name="Krishnan S.P."/>
            <person name="Kruger A."/>
            <person name="Kummerfeld S.K."/>
            <person name="Kurochkin I.V."/>
            <person name="Lareau L.F."/>
            <person name="Lazarevic D."/>
            <person name="Lipovich L."/>
            <person name="Liu J."/>
            <person name="Liuni S."/>
            <person name="McWilliam S."/>
            <person name="Madan Babu M."/>
            <person name="Madera M."/>
            <person name="Marchionni L."/>
            <person name="Matsuda H."/>
            <person name="Matsuzawa S."/>
            <person name="Miki H."/>
            <person name="Mignone F."/>
            <person name="Miyake S."/>
            <person name="Morris K."/>
            <person name="Mottagui-Tabar S."/>
            <person name="Mulder N."/>
            <person name="Nakano N."/>
            <person name="Nakauchi H."/>
            <person name="Ng P."/>
            <person name="Nilsson R."/>
            <person name="Nishiguchi S."/>
            <person name="Nishikawa S."/>
            <person name="Nori F."/>
            <person name="Ohara O."/>
            <person name="Okazaki Y."/>
            <person name="Orlando V."/>
            <person name="Pang K.C."/>
            <person name="Pavan W.J."/>
            <person name="Pavesi G."/>
            <person name="Pesole G."/>
            <person name="Petrovsky N."/>
            <person name="Piazza S."/>
            <person name="Reed J."/>
            <person name="Reid J.F."/>
            <person name="Ring B.Z."/>
            <person name="Ringwald M."/>
            <person name="Rost B."/>
            <person name="Ruan Y."/>
            <person name="Salzberg S.L."/>
            <person name="Sandelin A."/>
            <person name="Schneider C."/>
            <person name="Schoenbach C."/>
            <person name="Sekiguchi K."/>
            <person name="Semple C.A."/>
            <person name="Seno S."/>
            <person name="Sessa L."/>
            <person name="Sheng Y."/>
            <person name="Shibata Y."/>
            <person name="Shimada H."/>
            <person name="Shimada K."/>
            <person name="Silva D."/>
            <person name="Sinclair B."/>
            <person name="Sperling S."/>
            <person name="Stupka E."/>
            <person name="Sugiura K."/>
            <person name="Sultana R."/>
            <person name="Takenaka Y."/>
            <person name="Taki K."/>
            <person name="Tammoja K."/>
            <person name="Tan S.L."/>
            <person name="Tang S."/>
            <person name="Taylor M.S."/>
            <person name="Tegner J."/>
            <person name="Teichmann S.A."/>
            <person name="Ueda H.R."/>
            <person name="van Nimwegen E."/>
            <person name="Verardo R."/>
            <person name="Wei C.L."/>
            <person name="Yagi K."/>
            <person name="Yamanishi H."/>
            <person name="Zabarovsky E."/>
            <person name="Zhu S."/>
            <person name="Zimmer A."/>
            <person name="Hide W."/>
            <person name="Bult C."/>
            <person name="Grimmond S.M."/>
            <person name="Teasdale R.D."/>
            <person name="Liu E.T."/>
            <person name="Brusic V."/>
            <person name="Quackenbush J."/>
            <person name="Wahlestedt C."/>
            <person name="Mattick J.S."/>
            <person name="Hume D.A."/>
            <person name="Kai C."/>
            <person name="Sasaki D."/>
            <person name="Tomaru Y."/>
            <person name="Fukuda S."/>
            <person name="Kanamori-Katayama M."/>
            <person name="Suzuki M."/>
            <person name="Aoki J."/>
            <person name="Arakawa T."/>
            <person name="Iida J."/>
            <person name="Imamura K."/>
            <person name="Itoh M."/>
            <person name="Kato T."/>
            <person name="Kawaji H."/>
            <person name="Kawagashira N."/>
            <person name="Kawashima T."/>
            <person name="Kojima M."/>
            <person name="Kondo S."/>
            <person name="Konno H."/>
            <person name="Nakano K."/>
            <person name="Ninomiya N."/>
            <person name="Nishio T."/>
            <person name="Okada M."/>
            <person name="Plessy C."/>
            <person name="Shibata K."/>
            <person name="Shiraki T."/>
            <person name="Suzuki S."/>
            <person name="Tagami M."/>
            <person name="Waki K."/>
            <person name="Watahiki A."/>
            <person name="Okamura-Oho Y."/>
            <person name="Suzuki H."/>
            <person name="Kawai J."/>
            <person name="Hayashizaki Y."/>
        </authorList>
    </citation>
    <scope>NUCLEOTIDE SEQUENCE [LARGE SCALE MRNA]</scope>
    <source>
        <strain>C57BL/6J</strain>
        <tissue>Testis</tissue>
    </source>
</reference>
<reference key="2">
    <citation type="journal article" date="2004" name="Genome Res.">
        <title>The status, quality, and expansion of the NIH full-length cDNA project: the Mammalian Gene Collection (MGC).</title>
        <authorList>
            <consortium name="The MGC Project Team"/>
        </authorList>
    </citation>
    <scope>NUCLEOTIDE SEQUENCE [LARGE SCALE MRNA]</scope>
    <source>
        <tissue>Testis</tissue>
    </source>
</reference>
<dbReference type="EMBL" id="AK006319">
    <property type="protein sequence ID" value="BAB24525.1"/>
    <property type="molecule type" value="mRNA"/>
</dbReference>
<dbReference type="EMBL" id="AK006788">
    <property type="protein sequence ID" value="BAB24739.1"/>
    <property type="molecule type" value="mRNA"/>
</dbReference>
<dbReference type="EMBL" id="BC049569">
    <property type="protein sequence ID" value="AAH49569.1"/>
    <property type="molecule type" value="mRNA"/>
</dbReference>
<dbReference type="EMBL" id="BC059721">
    <property type="protein sequence ID" value="AAH59721.1"/>
    <property type="molecule type" value="mRNA"/>
</dbReference>
<dbReference type="CCDS" id="CCDS30012.1"/>
<dbReference type="RefSeq" id="NP_080372.1">
    <property type="nucleotide sequence ID" value="NM_026096.1"/>
</dbReference>
<dbReference type="SMR" id="Q9CR04"/>
<dbReference type="FunCoup" id="Q9CR04">
    <property type="interactions" value="4"/>
</dbReference>
<dbReference type="STRING" id="10090.ENSMUSP00000043734"/>
<dbReference type="PhosphoSitePlus" id="Q9CR04"/>
<dbReference type="PaxDb" id="10090-ENSMUSP00000043734"/>
<dbReference type="Antibodypedia" id="567">
    <property type="antibodies" value="32 antibodies from 10 providers"/>
</dbReference>
<dbReference type="DNASU" id="67334"/>
<dbReference type="Ensembl" id="ENSMUST00000044987.3">
    <property type="protein sequence ID" value="ENSMUSP00000043734.2"/>
    <property type="gene ID" value="ENSMUSG00000040456.3"/>
</dbReference>
<dbReference type="GeneID" id="67334"/>
<dbReference type="KEGG" id="mmu:67334"/>
<dbReference type="UCSC" id="uc009spz.1">
    <property type="organism name" value="mouse"/>
</dbReference>
<dbReference type="AGR" id="MGI:1914584"/>
<dbReference type="CTD" id="25763"/>
<dbReference type="MGI" id="MGI:1914584">
    <property type="gene designation" value="H2ap"/>
</dbReference>
<dbReference type="VEuPathDB" id="HostDB:ENSMUSG00000040456"/>
<dbReference type="eggNOG" id="ENOG502RU2P">
    <property type="taxonomic scope" value="Eukaryota"/>
</dbReference>
<dbReference type="GeneTree" id="ENSGT00390000015623"/>
<dbReference type="HOGENOM" id="CLU_062828_5_0_1"/>
<dbReference type="InParanoid" id="Q9CR04"/>
<dbReference type="OMA" id="NGRMRNT"/>
<dbReference type="OrthoDB" id="9664162at2759"/>
<dbReference type="PhylomeDB" id="Q9CR04"/>
<dbReference type="TreeFam" id="TF338397"/>
<dbReference type="BioGRID-ORCS" id="67334">
    <property type="hits" value="0 hits in 77 CRISPR screens"/>
</dbReference>
<dbReference type="PRO" id="PR:Q9CR04"/>
<dbReference type="Proteomes" id="UP000000589">
    <property type="component" value="Chromosome X"/>
</dbReference>
<dbReference type="RNAct" id="Q9CR04">
    <property type="molecule type" value="protein"/>
</dbReference>
<dbReference type="Bgee" id="ENSMUSG00000040456">
    <property type="expression patterns" value="Expressed in seminiferous tubule of testis and 5 other cell types or tissues"/>
</dbReference>
<dbReference type="GO" id="GO:0000786">
    <property type="term" value="C:nucleosome"/>
    <property type="evidence" value="ECO:0007669"/>
    <property type="project" value="InterPro"/>
</dbReference>
<dbReference type="GO" id="GO:0003677">
    <property type="term" value="F:DNA binding"/>
    <property type="evidence" value="ECO:0007669"/>
    <property type="project" value="InterPro"/>
</dbReference>
<dbReference type="GO" id="GO:0046982">
    <property type="term" value="F:protein heterodimerization activity"/>
    <property type="evidence" value="ECO:0007669"/>
    <property type="project" value="InterPro"/>
</dbReference>
<dbReference type="GO" id="GO:0030527">
    <property type="term" value="F:structural constituent of chromatin"/>
    <property type="evidence" value="ECO:0007669"/>
    <property type="project" value="InterPro"/>
</dbReference>
<dbReference type="FunFam" id="1.10.20.10:FF:000210">
    <property type="match status" value="1"/>
</dbReference>
<dbReference type="Gene3D" id="1.10.20.10">
    <property type="entry name" value="Histone, subunit A"/>
    <property type="match status" value="1"/>
</dbReference>
<dbReference type="InterPro" id="IPR009072">
    <property type="entry name" value="Histone-fold"/>
</dbReference>
<dbReference type="InterPro" id="IPR002119">
    <property type="entry name" value="Histone_H2A"/>
</dbReference>
<dbReference type="PRINTS" id="PR00620">
    <property type="entry name" value="HISTONEH2A"/>
</dbReference>
<dbReference type="SUPFAM" id="SSF47113">
    <property type="entry name" value="Histone-fold"/>
    <property type="match status" value="1"/>
</dbReference>
<accession>Q9CR04</accession>
<feature type="chain" id="PRO_0000254088" description="Huntingtin-interacting protein M">
    <location>
        <begin position="1"/>
        <end position="117"/>
    </location>
</feature>
<feature type="region of interest" description="Disordered" evidence="2">
    <location>
        <begin position="1"/>
        <end position="25"/>
    </location>
</feature>
<feature type="region of interest" description="Disordered" evidence="2">
    <location>
        <begin position="74"/>
        <end position="117"/>
    </location>
</feature>
<feature type="compositionally biased region" description="Basic and acidic residues" evidence="2">
    <location>
        <begin position="1"/>
        <end position="11"/>
    </location>
</feature>
<feature type="compositionally biased region" description="Basic and acidic residues" evidence="2">
    <location>
        <begin position="83"/>
        <end position="97"/>
    </location>
</feature>
<sequence length="117" mass="13492">MSEKKSQEKPCSDNNQIEDPSSRPEVQVPVNYVYRILQEEQYTPCIGSTTSDFLLAMLDYLTDYILEVVGSEANINNQQNISQDRERQRDNDREPSRGFKNAPFSLFDEMPGPRRNG</sequence>
<protein>
    <recommendedName>
        <fullName evidence="3">Huntingtin-interacting protein M</fullName>
    </recommendedName>
    <alternativeName>
        <fullName evidence="4">Histone H2A.P</fullName>
    </alternativeName>
    <alternativeName>
        <fullName>Huntingtin yeast partner M</fullName>
    </alternativeName>
</protein>
<comment type="subunit">
    <text evidence="1">May interact with the N-terminus of HD.</text>
</comment>
<evidence type="ECO:0000250" key="1"/>
<evidence type="ECO:0000256" key="2">
    <source>
        <dbReference type="SAM" id="MobiDB-lite"/>
    </source>
</evidence>
<evidence type="ECO:0000305" key="3"/>
<evidence type="ECO:0000312" key="4">
    <source>
        <dbReference type="MGI" id="MGI:1914584"/>
    </source>
</evidence>
<name>HYPM_MOUSE</name>
<organism>
    <name type="scientific">Mus musculus</name>
    <name type="common">Mouse</name>
    <dbReference type="NCBI Taxonomy" id="10090"/>
    <lineage>
        <taxon>Eukaryota</taxon>
        <taxon>Metazoa</taxon>
        <taxon>Chordata</taxon>
        <taxon>Craniata</taxon>
        <taxon>Vertebrata</taxon>
        <taxon>Euteleostomi</taxon>
        <taxon>Mammalia</taxon>
        <taxon>Eutheria</taxon>
        <taxon>Euarchontoglires</taxon>
        <taxon>Glires</taxon>
        <taxon>Rodentia</taxon>
        <taxon>Myomorpha</taxon>
        <taxon>Muroidea</taxon>
        <taxon>Muridae</taxon>
        <taxon>Murinae</taxon>
        <taxon>Mus</taxon>
        <taxon>Mus</taxon>
    </lineage>
</organism>
<keyword id="KW-1185">Reference proteome</keyword>